<accession>P0AE45</accession>
<accession>P39319</accession>
<accession>Q2M687</accession>
<organism>
    <name type="scientific">Escherichia coli (strain K12)</name>
    <dbReference type="NCBI Taxonomy" id="83333"/>
    <lineage>
        <taxon>Bacteria</taxon>
        <taxon>Pseudomonadati</taxon>
        <taxon>Pseudomonadota</taxon>
        <taxon>Gammaproteobacteria</taxon>
        <taxon>Enterobacterales</taxon>
        <taxon>Enterobacteriaceae</taxon>
        <taxon>Escherichia</taxon>
    </lineage>
</organism>
<protein>
    <recommendedName>
        <fullName evidence="6">Polyamine export protein</fullName>
    </recommendedName>
</protein>
<feature type="chain" id="PRO_0000088362" description="Polyamine export protein">
    <location>
        <begin position="1"/>
        <end position="447"/>
    </location>
</feature>
<feature type="topological domain" description="Cytoplasmic" evidence="7">
    <location>
        <begin position="1"/>
        <end position="4"/>
    </location>
</feature>
<feature type="transmembrane region" description="Helical" evidence="1">
    <location>
        <begin position="5"/>
        <end position="25"/>
    </location>
</feature>
<feature type="topological domain" description="Periplasmic" evidence="7">
    <location>
        <begin position="26"/>
        <end position="54"/>
    </location>
</feature>
<feature type="transmembrane region" description="Helical" evidence="1">
    <location>
        <begin position="55"/>
        <end position="75"/>
    </location>
</feature>
<feature type="topological domain" description="Cytoplasmic" evidence="7">
    <location>
        <begin position="76"/>
        <end position="99"/>
    </location>
</feature>
<feature type="transmembrane region" description="Helical" evidence="1">
    <location>
        <begin position="100"/>
        <end position="120"/>
    </location>
</feature>
<feature type="topological domain" description="Periplasmic" evidence="7">
    <location>
        <begin position="121"/>
        <end position="141"/>
    </location>
</feature>
<feature type="transmembrane region" description="Helical" evidence="1">
    <location>
        <begin position="142"/>
        <end position="162"/>
    </location>
</feature>
<feature type="topological domain" description="Cytoplasmic" evidence="4">
    <location>
        <begin position="163"/>
        <end position="447"/>
    </location>
</feature>
<feature type="domain" description="CNNM transmembrane" evidence="3">
    <location>
        <begin position="1"/>
        <end position="197"/>
    </location>
</feature>
<feature type="domain" description="CBS 1" evidence="2">
    <location>
        <begin position="216"/>
        <end position="275"/>
    </location>
</feature>
<feature type="domain" description="CBS 2" evidence="2">
    <location>
        <begin position="282"/>
        <end position="343"/>
    </location>
</feature>
<evidence type="ECO:0000255" key="1"/>
<evidence type="ECO:0000255" key="2">
    <source>
        <dbReference type="PROSITE-ProRule" id="PRU00703"/>
    </source>
</evidence>
<evidence type="ECO:0000255" key="3">
    <source>
        <dbReference type="PROSITE-ProRule" id="PRU01193"/>
    </source>
</evidence>
<evidence type="ECO:0000269" key="4">
    <source>
    </source>
</evidence>
<evidence type="ECO:0000269" key="5">
    <source>
    </source>
</evidence>
<evidence type="ECO:0000303" key="6">
    <source>
    </source>
</evidence>
<evidence type="ECO:0000305" key="7"/>
<proteinExistence type="evidence at protein level"/>
<comment type="function">
    <text evidence="5">Involved in cadaverine and putrescine tolerance in stationary phase. May facilitate the efflux of both cadaverine and putrescine from the cytoplasm, reducing potentially toxic levels under certain stress conditions.</text>
</comment>
<comment type="subcellular location">
    <subcellularLocation>
        <location evidence="4">Cell inner membrane</location>
        <topology evidence="1">Multi-pass membrane protein</topology>
    </subcellularLocation>
</comment>
<comment type="disruption phenotype">
    <text evidence="5">Deletion of the gene results in increased sensitivity to cadaverine and putrescine, but not to spermidine and spermine.</text>
</comment>
<comment type="similarity">
    <text evidence="7">Belongs to the UPF0053 family. PaeA subfamily.</text>
</comment>
<keyword id="KW-0129">CBS domain</keyword>
<keyword id="KW-0997">Cell inner membrane</keyword>
<keyword id="KW-1003">Cell membrane</keyword>
<keyword id="KW-0472">Membrane</keyword>
<keyword id="KW-1185">Reference proteome</keyword>
<keyword id="KW-0677">Repeat</keyword>
<keyword id="KW-0812">Transmembrane</keyword>
<keyword id="KW-1133">Transmembrane helix</keyword>
<keyword id="KW-0813">Transport</keyword>
<name>PAEA_ECOLI</name>
<gene>
    <name evidence="6" type="primary">paeA</name>
    <name type="synonym">ytfL</name>
    <name type="ordered locus">b4218</name>
    <name type="ordered locus">JW4177</name>
</gene>
<reference key="1">
    <citation type="journal article" date="1995" name="Nucleic Acids Res.">
        <title>Analysis of the Escherichia coli genome VI: DNA sequence of the region from 92.8 through 100 minutes.</title>
        <authorList>
            <person name="Burland V.D."/>
            <person name="Plunkett G. III"/>
            <person name="Sofia H.J."/>
            <person name="Daniels D.L."/>
            <person name="Blattner F.R."/>
        </authorList>
    </citation>
    <scope>NUCLEOTIDE SEQUENCE [LARGE SCALE GENOMIC DNA]</scope>
    <source>
        <strain>K12 / MG1655 / ATCC 47076</strain>
    </source>
</reference>
<reference key="2">
    <citation type="journal article" date="1997" name="Science">
        <title>The complete genome sequence of Escherichia coli K-12.</title>
        <authorList>
            <person name="Blattner F.R."/>
            <person name="Plunkett G. III"/>
            <person name="Bloch C.A."/>
            <person name="Perna N.T."/>
            <person name="Burland V."/>
            <person name="Riley M."/>
            <person name="Collado-Vides J."/>
            <person name="Glasner J.D."/>
            <person name="Rode C.K."/>
            <person name="Mayhew G.F."/>
            <person name="Gregor J."/>
            <person name="Davis N.W."/>
            <person name="Kirkpatrick H.A."/>
            <person name="Goeden M.A."/>
            <person name="Rose D.J."/>
            <person name="Mau B."/>
            <person name="Shao Y."/>
        </authorList>
    </citation>
    <scope>NUCLEOTIDE SEQUENCE [LARGE SCALE GENOMIC DNA]</scope>
    <source>
        <strain>K12 / MG1655 / ATCC 47076</strain>
    </source>
</reference>
<reference key="3">
    <citation type="journal article" date="2006" name="Mol. Syst. Biol.">
        <title>Highly accurate genome sequences of Escherichia coli K-12 strains MG1655 and W3110.</title>
        <authorList>
            <person name="Hayashi K."/>
            <person name="Morooka N."/>
            <person name="Yamamoto Y."/>
            <person name="Fujita K."/>
            <person name="Isono K."/>
            <person name="Choi S."/>
            <person name="Ohtsubo E."/>
            <person name="Baba T."/>
            <person name="Wanner B.L."/>
            <person name="Mori H."/>
            <person name="Horiuchi T."/>
        </authorList>
    </citation>
    <scope>NUCLEOTIDE SEQUENCE [LARGE SCALE GENOMIC DNA]</scope>
    <source>
        <strain>K12 / W3110 / ATCC 27325 / DSM 5911</strain>
    </source>
</reference>
<reference key="4">
    <citation type="journal article" date="2005" name="Science">
        <title>Global topology analysis of the Escherichia coli inner membrane proteome.</title>
        <authorList>
            <person name="Daley D.O."/>
            <person name="Rapp M."/>
            <person name="Granseth E."/>
            <person name="Melen K."/>
            <person name="Drew D."/>
            <person name="von Heijne G."/>
        </authorList>
    </citation>
    <scope>TOPOLOGY [LARGE SCALE ANALYSIS]</scope>
    <scope>SUBCELLULAR LOCATION</scope>
    <source>
        <strain>K12 / MG1655 / ATCC 47076</strain>
    </source>
</reference>
<reference key="5">
    <citation type="journal article" date="2021" name="Mol. Microbiol.">
        <title>PaeA (YtfL) protects from cadaverine and putrescine stress in Salmonella Typhimurium and E. coli.</title>
        <authorList>
            <person name="Iwadate Y."/>
            <person name="Ramezanifard R."/>
            <person name="Golubeva Y.A."/>
            <person name="Fenlon L.A."/>
            <person name="Slauch J.M."/>
        </authorList>
    </citation>
    <scope>FUNCTION</scope>
    <scope>DISRUPTION PHENOTYPE</scope>
    <source>
        <strain>K12 / MG1655 / ATCC 47076</strain>
    </source>
</reference>
<sequence length="447" mass="49763">MLNSILVILCLIAVSAFFSMSEISLAASRKIKLKLLADEGNINAQRVLNMQENPGMFFTVVQIGLNAVAILGGIVGDAAFSPAFHSLFSRYMSAELSEQLSFILSFSLVTGMFILFADLTPKRIGMIAPEAVALRIINPMRFCLYVCTPLVWFFNGLANIIFRIFKLPMVRKDDITSDDIYAVVEAGALAGVLRKQEHELIENVFELESRTVPSSMTPRENVIWFDLHEDEQSLKNKVAEHPHSKFLVCNEDIDHIIGYVDSKDLLNRVLANQSLALNSGVQIRNTLIVPDTLTLSEALESFKTAGEDFAVIMNEYALVVGIITLNDVMTTLMGDLVGQGLEEQIVARDENSWLIDGGTPIDDVMRVLDIDEFPQSGNYETIGGFMMFMLRKIPKRTDSVKFAGYKFEVVDIDNYRIDQLLVTRIDSKATALSPKLPDAKDKEESVA</sequence>
<dbReference type="EMBL" id="U14003">
    <property type="protein sequence ID" value="AAA97114.1"/>
    <property type="molecule type" value="Genomic_DNA"/>
</dbReference>
<dbReference type="EMBL" id="U00096">
    <property type="protein sequence ID" value="AAC77175.1"/>
    <property type="molecule type" value="Genomic_DNA"/>
</dbReference>
<dbReference type="EMBL" id="AP009048">
    <property type="protein sequence ID" value="BAE78219.1"/>
    <property type="molecule type" value="Genomic_DNA"/>
</dbReference>
<dbReference type="PIR" id="S56443">
    <property type="entry name" value="S56443"/>
</dbReference>
<dbReference type="RefSeq" id="NP_418639.1">
    <property type="nucleotide sequence ID" value="NC_000913.3"/>
</dbReference>
<dbReference type="RefSeq" id="WP_000935036.1">
    <property type="nucleotide sequence ID" value="NZ_STEB01000013.1"/>
</dbReference>
<dbReference type="SMR" id="P0AE45"/>
<dbReference type="BioGRID" id="4259306">
    <property type="interactions" value="58"/>
</dbReference>
<dbReference type="DIP" id="DIP-48233N"/>
<dbReference type="FunCoup" id="P0AE45">
    <property type="interactions" value="66"/>
</dbReference>
<dbReference type="IntAct" id="P0AE45">
    <property type="interactions" value="4"/>
</dbReference>
<dbReference type="STRING" id="511145.b4218"/>
<dbReference type="TCDB" id="1.A.112.2.11">
    <property type="family name" value="the cyclin m mg2+ exporter (cnnm) family"/>
</dbReference>
<dbReference type="jPOST" id="P0AE45"/>
<dbReference type="PaxDb" id="511145-b4218"/>
<dbReference type="EnsemblBacteria" id="AAC77175">
    <property type="protein sequence ID" value="AAC77175"/>
    <property type="gene ID" value="b4218"/>
</dbReference>
<dbReference type="GeneID" id="948735"/>
<dbReference type="KEGG" id="ecj:JW4177"/>
<dbReference type="KEGG" id="eco:b4218"/>
<dbReference type="KEGG" id="ecoc:C3026_22780"/>
<dbReference type="PATRIC" id="fig|1411691.4.peg.2483"/>
<dbReference type="EchoBASE" id="EB2405"/>
<dbReference type="eggNOG" id="COG1253">
    <property type="taxonomic scope" value="Bacteria"/>
</dbReference>
<dbReference type="HOGENOM" id="CLU_015237_4_0_6"/>
<dbReference type="InParanoid" id="P0AE45"/>
<dbReference type="OMA" id="TIGGYMM"/>
<dbReference type="OrthoDB" id="9797674at2"/>
<dbReference type="PhylomeDB" id="P0AE45"/>
<dbReference type="BioCyc" id="EcoCyc:G7873-MONOMER"/>
<dbReference type="PRO" id="PR:P0AE45"/>
<dbReference type="Proteomes" id="UP000000625">
    <property type="component" value="Chromosome"/>
</dbReference>
<dbReference type="GO" id="GO:0005886">
    <property type="term" value="C:plasma membrane"/>
    <property type="evidence" value="ECO:0000314"/>
    <property type="project" value="EcoCyc"/>
</dbReference>
<dbReference type="GO" id="GO:0050660">
    <property type="term" value="F:flavin adenine dinucleotide binding"/>
    <property type="evidence" value="ECO:0007669"/>
    <property type="project" value="InterPro"/>
</dbReference>
<dbReference type="CDD" id="cd04590">
    <property type="entry name" value="CBS_pair_CorC_HlyC_assoc"/>
    <property type="match status" value="1"/>
</dbReference>
<dbReference type="FunFam" id="3.10.580.10:FF:000005">
    <property type="entry name" value="HlyC/CorC family transporter"/>
    <property type="match status" value="1"/>
</dbReference>
<dbReference type="FunFam" id="3.30.465.10:FF:000002">
    <property type="entry name" value="HlyC/CorC family transporter"/>
    <property type="match status" value="1"/>
</dbReference>
<dbReference type="Gene3D" id="3.30.465.10">
    <property type="match status" value="1"/>
</dbReference>
<dbReference type="Gene3D" id="3.10.580.10">
    <property type="entry name" value="CBS-domain"/>
    <property type="match status" value="1"/>
</dbReference>
<dbReference type="InterPro" id="IPR000644">
    <property type="entry name" value="CBS_dom"/>
</dbReference>
<dbReference type="InterPro" id="IPR046342">
    <property type="entry name" value="CBS_dom_sf"/>
</dbReference>
<dbReference type="InterPro" id="IPR002550">
    <property type="entry name" value="CNNM"/>
</dbReference>
<dbReference type="InterPro" id="IPR036318">
    <property type="entry name" value="FAD-bd_PCMH-like_sf"/>
</dbReference>
<dbReference type="InterPro" id="IPR016169">
    <property type="entry name" value="FAD-bd_PCMH_sub2"/>
</dbReference>
<dbReference type="InterPro" id="IPR044751">
    <property type="entry name" value="Ion_transp-like_CBS"/>
</dbReference>
<dbReference type="InterPro" id="IPR005170">
    <property type="entry name" value="Transptr-assoc_dom"/>
</dbReference>
<dbReference type="PANTHER" id="PTHR22777">
    <property type="entry name" value="HEMOLYSIN-RELATED"/>
    <property type="match status" value="1"/>
</dbReference>
<dbReference type="PANTHER" id="PTHR22777:SF16">
    <property type="entry name" value="POLYAMINE EXPORT PROTEIN"/>
    <property type="match status" value="1"/>
</dbReference>
<dbReference type="Pfam" id="PF00571">
    <property type="entry name" value="CBS"/>
    <property type="match status" value="1"/>
</dbReference>
<dbReference type="Pfam" id="PF01595">
    <property type="entry name" value="CNNM"/>
    <property type="match status" value="1"/>
</dbReference>
<dbReference type="Pfam" id="PF03471">
    <property type="entry name" value="CorC_HlyC"/>
    <property type="match status" value="1"/>
</dbReference>
<dbReference type="SMART" id="SM01091">
    <property type="entry name" value="CorC_HlyC"/>
    <property type="match status" value="1"/>
</dbReference>
<dbReference type="SUPFAM" id="SSF54631">
    <property type="entry name" value="CBS-domain pair"/>
    <property type="match status" value="1"/>
</dbReference>
<dbReference type="SUPFAM" id="SSF56176">
    <property type="entry name" value="FAD-binding/transporter-associated domain-like"/>
    <property type="match status" value="1"/>
</dbReference>
<dbReference type="PROSITE" id="PS51371">
    <property type="entry name" value="CBS"/>
    <property type="match status" value="2"/>
</dbReference>
<dbReference type="PROSITE" id="PS51846">
    <property type="entry name" value="CNNM"/>
    <property type="match status" value="1"/>
</dbReference>